<sequence>MDIKLLYRLIKYLKFYKKDLIIVMISLLSVSASLLLIGSVFRNLVDNGLSQNHILSVDKSILYICLLIIILSIASFFRSYFINNVAEKAVNQIRKDAYSNLITYEIEEFEELKIGDIISRLTNDIDQISTLIVNFLSFFIRNSVMLIGGVTLMFFESFKLASIVIITIPILLIPLIKFGKHVKALSKKALESKSLLASDIDETFNNIRAIYAFNNQTNKITDFDTKLQNYLTYCKTRLKIRALFFAISIAIIFLAITLVVWIGASDIVKGNLSAGQIISFIYYAIIAGFSSGGIFELLSEIHLPLAALERIITIIDKTPITHNSYLELNNSDPISIEFKNVDFTYHSRPNLRIINNMSLKINADKFIGIVGRSGGGKSTLMQLLLRFYRQESGTILINNQDITLSNPAEIRKLIAYVPQEANIFSGTIKSNIIFGNTQASDDDINEIIKITGIEEFAAKLHDGINAKIGERGVRLSGGQKQRIAIARALLRKPQILLLDEAMSALDTMSEQKLLESIKEIMKGKIIISIAHRISSIESADYILVIDKGGVAASGSHNDLSKNSEIYRNICREQLTV</sequence>
<reference key="1">
    <citation type="journal article" date="2005" name="PLoS Biol.">
        <title>The genome sequence of Rickettsia felis identifies the first putative conjugative plasmid in an obligate intracellular parasite.</title>
        <authorList>
            <person name="Ogata H."/>
            <person name="Renesto P."/>
            <person name="Audic S."/>
            <person name="Robert C."/>
            <person name="Blanc G."/>
            <person name="Fournier P.-E."/>
            <person name="Parinello H."/>
            <person name="Claverie J.-M."/>
            <person name="Raoult D."/>
        </authorList>
    </citation>
    <scope>NUCLEOTIDE SEQUENCE [LARGE SCALE GENOMIC DNA]</scope>
    <source>
        <strain>ATCC VR-1525 / URRWXCal2</strain>
    </source>
</reference>
<gene>
    <name type="ordered locus">RF_0214</name>
</gene>
<evidence type="ECO:0000250" key="1"/>
<evidence type="ECO:0000255" key="2">
    <source>
        <dbReference type="PROSITE-ProRule" id="PRU00434"/>
    </source>
</evidence>
<evidence type="ECO:0000255" key="3">
    <source>
        <dbReference type="PROSITE-ProRule" id="PRU00441"/>
    </source>
</evidence>
<evidence type="ECO:0000305" key="4"/>
<accession>Q4UMZ3</accession>
<organism>
    <name type="scientific">Rickettsia felis (strain ATCC VR-1525 / URRWXCal2)</name>
    <name type="common">Rickettsia azadi</name>
    <dbReference type="NCBI Taxonomy" id="315456"/>
    <lineage>
        <taxon>Bacteria</taxon>
        <taxon>Pseudomonadati</taxon>
        <taxon>Pseudomonadota</taxon>
        <taxon>Alphaproteobacteria</taxon>
        <taxon>Rickettsiales</taxon>
        <taxon>Rickettsiaceae</taxon>
        <taxon>Rickettsieae</taxon>
        <taxon>Rickettsia</taxon>
        <taxon>spotted fever group</taxon>
    </lineage>
</organism>
<keyword id="KW-0067">ATP-binding</keyword>
<keyword id="KW-0997">Cell inner membrane</keyword>
<keyword id="KW-1003">Cell membrane</keyword>
<keyword id="KW-0472">Membrane</keyword>
<keyword id="KW-0547">Nucleotide-binding</keyword>
<keyword id="KW-1278">Translocase</keyword>
<keyword id="KW-0812">Transmembrane</keyword>
<keyword id="KW-1133">Transmembrane helix</keyword>
<keyword id="KW-0813">Transport</keyword>
<dbReference type="EC" id="7.-.-.-"/>
<dbReference type="EMBL" id="CP000053">
    <property type="protein sequence ID" value="AAY61065.1"/>
    <property type="status" value="ALT_INIT"/>
    <property type="molecule type" value="Genomic_DNA"/>
</dbReference>
<dbReference type="SMR" id="Q4UMZ3"/>
<dbReference type="STRING" id="315456.RF_0214"/>
<dbReference type="KEGG" id="rfe:RF_0214"/>
<dbReference type="eggNOG" id="COG1132">
    <property type="taxonomic scope" value="Bacteria"/>
</dbReference>
<dbReference type="HOGENOM" id="CLU_000604_84_3_5"/>
<dbReference type="OrthoDB" id="9804259at2"/>
<dbReference type="Proteomes" id="UP000008548">
    <property type="component" value="Chromosome"/>
</dbReference>
<dbReference type="GO" id="GO:0005886">
    <property type="term" value="C:plasma membrane"/>
    <property type="evidence" value="ECO:0007669"/>
    <property type="project" value="UniProtKB-SubCell"/>
</dbReference>
<dbReference type="GO" id="GO:0015421">
    <property type="term" value="F:ABC-type oligopeptide transporter activity"/>
    <property type="evidence" value="ECO:0007669"/>
    <property type="project" value="TreeGrafter"/>
</dbReference>
<dbReference type="GO" id="GO:0005524">
    <property type="term" value="F:ATP binding"/>
    <property type="evidence" value="ECO:0007669"/>
    <property type="project" value="UniProtKB-KW"/>
</dbReference>
<dbReference type="GO" id="GO:0016887">
    <property type="term" value="F:ATP hydrolysis activity"/>
    <property type="evidence" value="ECO:0007669"/>
    <property type="project" value="InterPro"/>
</dbReference>
<dbReference type="CDD" id="cd18575">
    <property type="entry name" value="ABC_6TM_bac_exporter_ABCB8_10_like"/>
    <property type="match status" value="1"/>
</dbReference>
<dbReference type="FunFam" id="3.40.50.300:FF:000218">
    <property type="entry name" value="Multidrug ABC transporter ATP-binding protein"/>
    <property type="match status" value="1"/>
</dbReference>
<dbReference type="Gene3D" id="1.20.1560.10">
    <property type="entry name" value="ABC transporter type 1, transmembrane domain"/>
    <property type="match status" value="1"/>
</dbReference>
<dbReference type="Gene3D" id="3.40.50.300">
    <property type="entry name" value="P-loop containing nucleotide triphosphate hydrolases"/>
    <property type="match status" value="1"/>
</dbReference>
<dbReference type="InterPro" id="IPR003593">
    <property type="entry name" value="AAA+_ATPase"/>
</dbReference>
<dbReference type="InterPro" id="IPR011527">
    <property type="entry name" value="ABC1_TM_dom"/>
</dbReference>
<dbReference type="InterPro" id="IPR036640">
    <property type="entry name" value="ABC1_TM_sf"/>
</dbReference>
<dbReference type="InterPro" id="IPR003439">
    <property type="entry name" value="ABC_transporter-like_ATP-bd"/>
</dbReference>
<dbReference type="InterPro" id="IPR017871">
    <property type="entry name" value="ABC_transporter-like_CS"/>
</dbReference>
<dbReference type="InterPro" id="IPR027417">
    <property type="entry name" value="P-loop_NTPase"/>
</dbReference>
<dbReference type="InterPro" id="IPR039421">
    <property type="entry name" value="Type_1_exporter"/>
</dbReference>
<dbReference type="PANTHER" id="PTHR43394:SF1">
    <property type="entry name" value="ATP-BINDING CASSETTE SUB-FAMILY B MEMBER 10, MITOCHONDRIAL"/>
    <property type="match status" value="1"/>
</dbReference>
<dbReference type="PANTHER" id="PTHR43394">
    <property type="entry name" value="ATP-DEPENDENT PERMEASE MDL1, MITOCHONDRIAL"/>
    <property type="match status" value="1"/>
</dbReference>
<dbReference type="Pfam" id="PF00664">
    <property type="entry name" value="ABC_membrane"/>
    <property type="match status" value="1"/>
</dbReference>
<dbReference type="Pfam" id="PF00005">
    <property type="entry name" value="ABC_tran"/>
    <property type="match status" value="1"/>
</dbReference>
<dbReference type="SMART" id="SM00382">
    <property type="entry name" value="AAA"/>
    <property type="match status" value="1"/>
</dbReference>
<dbReference type="SUPFAM" id="SSF90123">
    <property type="entry name" value="ABC transporter transmembrane region"/>
    <property type="match status" value="1"/>
</dbReference>
<dbReference type="SUPFAM" id="SSF52540">
    <property type="entry name" value="P-loop containing nucleoside triphosphate hydrolases"/>
    <property type="match status" value="1"/>
</dbReference>
<dbReference type="PROSITE" id="PS50929">
    <property type="entry name" value="ABC_TM1F"/>
    <property type="match status" value="1"/>
</dbReference>
<dbReference type="PROSITE" id="PS00211">
    <property type="entry name" value="ABC_TRANSPORTER_1"/>
    <property type="match status" value="1"/>
</dbReference>
<dbReference type="PROSITE" id="PS50893">
    <property type="entry name" value="ABC_TRANSPORTER_2"/>
    <property type="match status" value="1"/>
</dbReference>
<comment type="function">
    <text evidence="1">Part of an ABC transporter complex. Transmembrane domains (TMD) form a pore in the inner membrane and the ATP-binding domain (NBD) is responsible for energy generation (By similarity).</text>
</comment>
<comment type="subunit">
    <text evidence="1">Homodimer.</text>
</comment>
<comment type="subcellular location">
    <subcellularLocation>
        <location evidence="1">Cell inner membrane</location>
        <topology evidence="3">Multi-pass membrane protein</topology>
    </subcellularLocation>
</comment>
<comment type="domain">
    <text>The ATP-binding domain (NBD) and the transmembrane domain (TMD) are fused.</text>
</comment>
<comment type="similarity">
    <text evidence="4">Belongs to the ABC transporter superfamily.</text>
</comment>
<comment type="sequence caution" evidence="4">
    <conflict type="erroneous initiation">
        <sequence resource="EMBL-CDS" id="AAY61065"/>
    </conflict>
</comment>
<name>Y214_RICFE</name>
<proteinExistence type="inferred from homology"/>
<feature type="chain" id="PRO_0000278657" description="Putative export ATP-binding/permease protein RF_0214">
    <location>
        <begin position="1"/>
        <end position="576"/>
    </location>
</feature>
<feature type="transmembrane region" description="Helical" evidence="3">
    <location>
        <begin position="21"/>
        <end position="41"/>
    </location>
</feature>
<feature type="transmembrane region" description="Helical" evidence="3">
    <location>
        <begin position="61"/>
        <end position="81"/>
    </location>
</feature>
<feature type="transmembrane region" description="Helical" evidence="3">
    <location>
        <begin position="135"/>
        <end position="155"/>
    </location>
</feature>
<feature type="transmembrane region" description="Helical" evidence="3">
    <location>
        <begin position="158"/>
        <end position="178"/>
    </location>
</feature>
<feature type="transmembrane region" description="Helical" evidence="3">
    <location>
        <begin position="242"/>
        <end position="262"/>
    </location>
</feature>
<feature type="transmembrane region" description="Helical" evidence="3">
    <location>
        <begin position="277"/>
        <end position="297"/>
    </location>
</feature>
<feature type="domain" description="ABC transmembrane type-1" evidence="3">
    <location>
        <begin position="20"/>
        <end position="303"/>
    </location>
</feature>
<feature type="domain" description="ABC transporter" evidence="2">
    <location>
        <begin position="336"/>
        <end position="572"/>
    </location>
</feature>
<feature type="binding site" evidence="2">
    <location>
        <begin position="371"/>
        <end position="378"/>
    </location>
    <ligand>
        <name>ATP</name>
        <dbReference type="ChEBI" id="CHEBI:30616"/>
    </ligand>
</feature>
<protein>
    <recommendedName>
        <fullName>Putative export ATP-binding/permease protein RF_0214</fullName>
        <ecNumber>7.-.-.-</ecNumber>
    </recommendedName>
</protein>